<gene>
    <name type="ordered locus">Ldb0677</name>
</gene>
<name>Y677_LACDA</name>
<feature type="chain" id="PRO_0000257074" description="Probable transcriptional regulatory protein Ldb0677">
    <location>
        <begin position="1"/>
        <end position="243"/>
    </location>
</feature>
<feature type="region of interest" description="Disordered" evidence="2">
    <location>
        <begin position="1"/>
        <end position="22"/>
    </location>
</feature>
<keyword id="KW-0963">Cytoplasm</keyword>
<keyword id="KW-0238">DNA-binding</keyword>
<keyword id="KW-1185">Reference proteome</keyword>
<keyword id="KW-0804">Transcription</keyword>
<keyword id="KW-0805">Transcription regulation</keyword>
<sequence>MSGHSKWHNIQGRKNAQDAKRGKVFQKLSREIYMAAKSGGPDPLGNPRLRLAVDKARAANMPKDNIQRAIKKAEGNSDEHYDEVTYEGYAPGGVAILVEALTDNKNRTASSVRVAFTRNGGSLGATGSVAYMFDRKGYIVIDRSTTDADEDQMLMDVMEAGGDDLQTSDDAYEIYTDAKSFTAVRDALEKAGYQLAVSELTMVPQNTTPVPADKKEQFEKLVDALEDDDDVSNVYTAAADEEE</sequence>
<comment type="subcellular location">
    <subcellularLocation>
        <location evidence="1">Cytoplasm</location>
    </subcellularLocation>
</comment>
<comment type="similarity">
    <text evidence="1">Belongs to the TACO1 family.</text>
</comment>
<reference key="1">
    <citation type="journal article" date="2006" name="Proc. Natl. Acad. Sci. U.S.A.">
        <title>The complete genome sequence of Lactobacillus bulgaricus reveals extensive and ongoing reductive evolution.</title>
        <authorList>
            <person name="van de Guchte M."/>
            <person name="Penaud S."/>
            <person name="Grimaldi C."/>
            <person name="Barbe V."/>
            <person name="Bryson K."/>
            <person name="Nicolas P."/>
            <person name="Robert C."/>
            <person name="Oztas S."/>
            <person name="Mangenot S."/>
            <person name="Couloux A."/>
            <person name="Loux V."/>
            <person name="Dervyn R."/>
            <person name="Bossy R."/>
            <person name="Bolotin A."/>
            <person name="Batto J.-M."/>
            <person name="Walunas T."/>
            <person name="Gibrat J.-F."/>
            <person name="Bessieres P."/>
            <person name="Weissenbach J."/>
            <person name="Ehrlich S.D."/>
            <person name="Maguin E."/>
        </authorList>
    </citation>
    <scope>NUCLEOTIDE SEQUENCE [LARGE SCALE GENOMIC DNA]</scope>
    <source>
        <strain>ATCC 11842 / DSM 20081 / BCRC 10696 / JCM 1002 / NBRC 13953 / NCIMB 11778 / NCTC 12712 / WDCM 00102 / Lb 14</strain>
    </source>
</reference>
<proteinExistence type="inferred from homology"/>
<organism>
    <name type="scientific">Lactobacillus delbrueckii subsp. bulgaricus (strain ATCC 11842 / DSM 20081 / BCRC 10696 / JCM 1002 / NBRC 13953 / NCIMB 11778 / NCTC 12712 / WDCM 00102 / Lb 14)</name>
    <dbReference type="NCBI Taxonomy" id="390333"/>
    <lineage>
        <taxon>Bacteria</taxon>
        <taxon>Bacillati</taxon>
        <taxon>Bacillota</taxon>
        <taxon>Bacilli</taxon>
        <taxon>Lactobacillales</taxon>
        <taxon>Lactobacillaceae</taxon>
        <taxon>Lactobacillus</taxon>
    </lineage>
</organism>
<evidence type="ECO:0000255" key="1">
    <source>
        <dbReference type="HAMAP-Rule" id="MF_00693"/>
    </source>
</evidence>
<evidence type="ECO:0000256" key="2">
    <source>
        <dbReference type="SAM" id="MobiDB-lite"/>
    </source>
</evidence>
<dbReference type="EMBL" id="CR954253">
    <property type="protein sequence ID" value="CAI97506.1"/>
    <property type="molecule type" value="Genomic_DNA"/>
</dbReference>
<dbReference type="RefSeq" id="WP_003622770.1">
    <property type="nucleotide sequence ID" value="NZ_JQAV01000001.1"/>
</dbReference>
<dbReference type="SMR" id="Q1GAZ3"/>
<dbReference type="STRING" id="390333.Ldb0677"/>
<dbReference type="KEGG" id="ldb:Ldb0677"/>
<dbReference type="PATRIC" id="fig|390333.13.peg.122"/>
<dbReference type="eggNOG" id="COG0217">
    <property type="taxonomic scope" value="Bacteria"/>
</dbReference>
<dbReference type="HOGENOM" id="CLU_062974_3_0_9"/>
<dbReference type="BioCyc" id="LDEL390333:LDB_RS02935-MONOMER"/>
<dbReference type="Proteomes" id="UP000001259">
    <property type="component" value="Chromosome"/>
</dbReference>
<dbReference type="GO" id="GO:0005829">
    <property type="term" value="C:cytosol"/>
    <property type="evidence" value="ECO:0007669"/>
    <property type="project" value="TreeGrafter"/>
</dbReference>
<dbReference type="GO" id="GO:0003677">
    <property type="term" value="F:DNA binding"/>
    <property type="evidence" value="ECO:0007669"/>
    <property type="project" value="UniProtKB-UniRule"/>
</dbReference>
<dbReference type="GO" id="GO:0006355">
    <property type="term" value="P:regulation of DNA-templated transcription"/>
    <property type="evidence" value="ECO:0007669"/>
    <property type="project" value="UniProtKB-UniRule"/>
</dbReference>
<dbReference type="FunFam" id="1.10.10.200:FF:000002">
    <property type="entry name" value="Probable transcriptional regulatory protein CLM62_37755"/>
    <property type="match status" value="1"/>
</dbReference>
<dbReference type="FunFam" id="3.30.70.980:FF:000002">
    <property type="entry name" value="Probable transcriptional regulatory protein YebC"/>
    <property type="match status" value="1"/>
</dbReference>
<dbReference type="Gene3D" id="1.10.10.200">
    <property type="match status" value="1"/>
</dbReference>
<dbReference type="Gene3D" id="3.30.70.980">
    <property type="match status" value="2"/>
</dbReference>
<dbReference type="HAMAP" id="MF_00693">
    <property type="entry name" value="Transcrip_reg_TACO1"/>
    <property type="match status" value="1"/>
</dbReference>
<dbReference type="InterPro" id="IPR017856">
    <property type="entry name" value="Integrase-like_N"/>
</dbReference>
<dbReference type="InterPro" id="IPR048300">
    <property type="entry name" value="TACO1_YebC-like_2nd/3rd_dom"/>
</dbReference>
<dbReference type="InterPro" id="IPR049083">
    <property type="entry name" value="TACO1_YebC_N"/>
</dbReference>
<dbReference type="InterPro" id="IPR002876">
    <property type="entry name" value="Transcrip_reg_TACO1-like"/>
</dbReference>
<dbReference type="InterPro" id="IPR026564">
    <property type="entry name" value="Transcrip_reg_TACO1-like_dom3"/>
</dbReference>
<dbReference type="InterPro" id="IPR029072">
    <property type="entry name" value="YebC-like"/>
</dbReference>
<dbReference type="NCBIfam" id="NF001030">
    <property type="entry name" value="PRK00110.1"/>
    <property type="match status" value="1"/>
</dbReference>
<dbReference type="NCBIfam" id="NF009044">
    <property type="entry name" value="PRK12378.1"/>
    <property type="match status" value="1"/>
</dbReference>
<dbReference type="NCBIfam" id="TIGR01033">
    <property type="entry name" value="YebC/PmpR family DNA-binding transcriptional regulator"/>
    <property type="match status" value="1"/>
</dbReference>
<dbReference type="PANTHER" id="PTHR12532:SF6">
    <property type="entry name" value="TRANSCRIPTIONAL REGULATORY PROTEIN YEBC-RELATED"/>
    <property type="match status" value="1"/>
</dbReference>
<dbReference type="PANTHER" id="PTHR12532">
    <property type="entry name" value="TRANSLATIONAL ACTIVATOR OF CYTOCHROME C OXIDASE 1"/>
    <property type="match status" value="1"/>
</dbReference>
<dbReference type="Pfam" id="PF20772">
    <property type="entry name" value="TACO1_YebC_N"/>
    <property type="match status" value="1"/>
</dbReference>
<dbReference type="Pfam" id="PF01709">
    <property type="entry name" value="Transcrip_reg"/>
    <property type="match status" value="1"/>
</dbReference>
<dbReference type="SUPFAM" id="SSF75625">
    <property type="entry name" value="YebC-like"/>
    <property type="match status" value="1"/>
</dbReference>
<protein>
    <recommendedName>
        <fullName evidence="1">Probable transcriptional regulatory protein Ldb0677</fullName>
    </recommendedName>
</protein>
<accession>Q1GAZ3</accession>